<dbReference type="EC" id="1.14.14.1" evidence="2"/>
<dbReference type="EC" id="4.2.1.152" evidence="2"/>
<dbReference type="EMBL" id="AB185338">
    <property type="protein sequence ID" value="BAE16271.1"/>
    <property type="molecule type" value="mRNA"/>
</dbReference>
<dbReference type="SMR" id="Q4H4C3"/>
<dbReference type="GlyCosmos" id="Q4H4C3">
    <property type="glycosylation" value="1 site, No reported glycans"/>
</dbReference>
<dbReference type="UniPathway" id="UPA00296"/>
<dbReference type="UniPathway" id="UPA00383"/>
<dbReference type="UniPathway" id="UPA00912"/>
<dbReference type="GO" id="GO:0005789">
    <property type="term" value="C:endoplasmic reticulum membrane"/>
    <property type="evidence" value="ECO:0007669"/>
    <property type="project" value="UniProtKB-SubCell"/>
</dbReference>
<dbReference type="GO" id="GO:0101020">
    <property type="term" value="F:estrogen 16-alpha-hydroxylase activity"/>
    <property type="evidence" value="ECO:0000250"/>
    <property type="project" value="UniProtKB"/>
</dbReference>
<dbReference type="GO" id="GO:0101021">
    <property type="term" value="F:estrogen 2-hydroxylase activity"/>
    <property type="evidence" value="ECO:0000250"/>
    <property type="project" value="UniProtKB"/>
</dbReference>
<dbReference type="GO" id="GO:0020037">
    <property type="term" value="F:heme binding"/>
    <property type="evidence" value="ECO:0000250"/>
    <property type="project" value="UniProtKB"/>
</dbReference>
<dbReference type="GO" id="GO:0106256">
    <property type="term" value="F:hydroperoxy icosatetraenoate dehydratase activity"/>
    <property type="evidence" value="ECO:0007669"/>
    <property type="project" value="UniProtKB-EC"/>
</dbReference>
<dbReference type="GO" id="GO:0005506">
    <property type="term" value="F:iron ion binding"/>
    <property type="evidence" value="ECO:0007669"/>
    <property type="project" value="InterPro"/>
</dbReference>
<dbReference type="GO" id="GO:0004508">
    <property type="term" value="F:steroid 17-alpha-monooxygenase activity"/>
    <property type="evidence" value="ECO:0007669"/>
    <property type="project" value="TreeGrafter"/>
</dbReference>
<dbReference type="GO" id="GO:0019369">
    <property type="term" value="P:arachidonate metabolic process"/>
    <property type="evidence" value="ECO:0007669"/>
    <property type="project" value="UniProtKB-UniPathway"/>
</dbReference>
<dbReference type="GO" id="GO:0008203">
    <property type="term" value="P:cholesterol metabolic process"/>
    <property type="evidence" value="ECO:0007669"/>
    <property type="project" value="UniProtKB-UniPathway"/>
</dbReference>
<dbReference type="GO" id="GO:0008210">
    <property type="term" value="P:estrogen metabolic process"/>
    <property type="evidence" value="ECO:0000250"/>
    <property type="project" value="UniProtKB"/>
</dbReference>
<dbReference type="GO" id="GO:0042446">
    <property type="term" value="P:hormone biosynthetic process"/>
    <property type="evidence" value="ECO:0007669"/>
    <property type="project" value="TreeGrafter"/>
</dbReference>
<dbReference type="GO" id="GO:0042448">
    <property type="term" value="P:progesterone metabolic process"/>
    <property type="evidence" value="ECO:0007669"/>
    <property type="project" value="TreeGrafter"/>
</dbReference>
<dbReference type="GO" id="GO:0042572">
    <property type="term" value="P:retinol metabolic process"/>
    <property type="evidence" value="ECO:0000250"/>
    <property type="project" value="UniProtKB"/>
</dbReference>
<dbReference type="CDD" id="cd20676">
    <property type="entry name" value="CYP1A"/>
    <property type="match status" value="1"/>
</dbReference>
<dbReference type="FunFam" id="1.10.630.10:FF:000002">
    <property type="entry name" value="Cytochrome P450 1A1"/>
    <property type="match status" value="1"/>
</dbReference>
<dbReference type="Gene3D" id="1.10.630.10">
    <property type="entry name" value="Cytochrome P450"/>
    <property type="match status" value="1"/>
</dbReference>
<dbReference type="InterPro" id="IPR001128">
    <property type="entry name" value="Cyt_P450"/>
</dbReference>
<dbReference type="InterPro" id="IPR017972">
    <property type="entry name" value="Cyt_P450_CS"/>
</dbReference>
<dbReference type="InterPro" id="IPR002401">
    <property type="entry name" value="Cyt_P450_E_grp-I"/>
</dbReference>
<dbReference type="InterPro" id="IPR008066">
    <property type="entry name" value="Cyt_P450_E_grp-I_CYP1"/>
</dbReference>
<dbReference type="InterPro" id="IPR036396">
    <property type="entry name" value="Cyt_P450_sf"/>
</dbReference>
<dbReference type="PANTHER" id="PTHR24289:SF21">
    <property type="entry name" value="CYTOCHROME P450 1A"/>
    <property type="match status" value="1"/>
</dbReference>
<dbReference type="PANTHER" id="PTHR24289">
    <property type="entry name" value="STEROID 17-ALPHA-HYDROXYLASE/17,20 LYASE"/>
    <property type="match status" value="1"/>
</dbReference>
<dbReference type="Pfam" id="PF00067">
    <property type="entry name" value="p450"/>
    <property type="match status" value="1"/>
</dbReference>
<dbReference type="PRINTS" id="PR00463">
    <property type="entry name" value="EP450I"/>
</dbReference>
<dbReference type="PRINTS" id="PR01683">
    <property type="entry name" value="EP450ICYP1A"/>
</dbReference>
<dbReference type="PRINTS" id="PR00385">
    <property type="entry name" value="P450"/>
</dbReference>
<dbReference type="SUPFAM" id="SSF48264">
    <property type="entry name" value="Cytochrome P450"/>
    <property type="match status" value="1"/>
</dbReference>
<dbReference type="PROSITE" id="PS00086">
    <property type="entry name" value="CYTOCHROME_P450"/>
    <property type="match status" value="1"/>
</dbReference>
<organism>
    <name type="scientific">Macaca fuscata fuscata</name>
    <name type="common">Japanese macaque</name>
    <dbReference type="NCBI Taxonomy" id="9543"/>
    <lineage>
        <taxon>Eukaryota</taxon>
        <taxon>Metazoa</taxon>
        <taxon>Chordata</taxon>
        <taxon>Craniata</taxon>
        <taxon>Vertebrata</taxon>
        <taxon>Euteleostomi</taxon>
        <taxon>Mammalia</taxon>
        <taxon>Eutheria</taxon>
        <taxon>Euarchontoglires</taxon>
        <taxon>Primates</taxon>
        <taxon>Haplorrhini</taxon>
        <taxon>Catarrhini</taxon>
        <taxon>Cercopithecidae</taxon>
        <taxon>Cercopithecinae</taxon>
        <taxon>Macaca</taxon>
    </lineage>
</organism>
<comment type="function">
    <text evidence="2">A cytochrome P450 monooxygenase involved in the metabolism of various endogenous substrates, including fatty acids, steroid hormones and vitamins. Mechanistically, uses molecular oxygen inserting one oxygen atom into a substrate, and reducing the second into a water molecule, with two electrons provided by NADPH via cytochrome P450 reductase (NADPH--hemoprotein reductase). Catalyzes the hydroxylation of carbon-hydrogen bonds. Exhibits high catalytic activity for the formation of hydroxyestrogens from estrone (E1) and 17beta-estradiol (E2), namely 2-hydroxy E1 and E2. Metabolizes cholesterol toward 25-hydroxycholesterol, a physiological regulator of cellular cholesterol homeostasis. May act as a major enzyme for all-trans retinoic acid biosynthesis in the liver. Catalyzes two successive oxidative transformation of all-trans retinol to all-trans retinal and then to the active form all-trans retinoic acid. Primarily catalyzes stereoselective epoxidation of the last double bond of polyunsaturated fatty acids (PUFA), displaying a strong preference for the (R,S) stereoisomer. Catalyzes bisallylic hydroxylation and omega-1 hydroxylation of PUFA. May also participate in eicosanoids metabolism by converting hydroperoxide species into oxo metabolites (lipoxygenase-like reaction, NADPH-independent). Plays a role in the oxidative metabolism of xenobiotics. Catalyzes the N-hydroxylation of heterocyclic amines and the O-deethylation of phenacetin. Metabolizes caffeine via N3-demethylation.</text>
</comment>
<comment type="catalytic activity">
    <reaction evidence="2">
        <text>an organic molecule + reduced [NADPH--hemoprotein reductase] + O2 = an alcohol + oxidized [NADPH--hemoprotein reductase] + H2O + H(+)</text>
        <dbReference type="Rhea" id="RHEA:17149"/>
        <dbReference type="Rhea" id="RHEA-COMP:11964"/>
        <dbReference type="Rhea" id="RHEA-COMP:11965"/>
        <dbReference type="ChEBI" id="CHEBI:15377"/>
        <dbReference type="ChEBI" id="CHEBI:15378"/>
        <dbReference type="ChEBI" id="CHEBI:15379"/>
        <dbReference type="ChEBI" id="CHEBI:30879"/>
        <dbReference type="ChEBI" id="CHEBI:57618"/>
        <dbReference type="ChEBI" id="CHEBI:58210"/>
        <dbReference type="ChEBI" id="CHEBI:142491"/>
        <dbReference type="EC" id="1.14.14.1"/>
    </reaction>
    <physiologicalReaction direction="left-to-right" evidence="2">
        <dbReference type="Rhea" id="RHEA:17150"/>
    </physiologicalReaction>
</comment>
<comment type="catalytic activity">
    <reaction evidence="2">
        <text>17beta-estradiol + reduced [NADPH--hemoprotein reductase] + O2 = 2-hydroxy-17beta-estradiol + oxidized [NADPH--hemoprotein reductase] + H2O + H(+)</text>
        <dbReference type="Rhea" id="RHEA:47212"/>
        <dbReference type="Rhea" id="RHEA-COMP:11964"/>
        <dbReference type="Rhea" id="RHEA-COMP:11965"/>
        <dbReference type="ChEBI" id="CHEBI:15377"/>
        <dbReference type="ChEBI" id="CHEBI:15378"/>
        <dbReference type="ChEBI" id="CHEBI:15379"/>
        <dbReference type="ChEBI" id="CHEBI:16469"/>
        <dbReference type="ChEBI" id="CHEBI:28744"/>
        <dbReference type="ChEBI" id="CHEBI:57618"/>
        <dbReference type="ChEBI" id="CHEBI:58210"/>
    </reaction>
    <physiologicalReaction direction="left-to-right" evidence="2">
        <dbReference type="Rhea" id="RHEA:47213"/>
    </physiologicalReaction>
</comment>
<comment type="catalytic activity">
    <reaction evidence="2">
        <text>17beta-estradiol + reduced [NADPH--hemoprotein reductase] + O2 = 4-hydroxy-17beta-estradiol + oxidized [NADPH--hemoprotein reductase] + H2O + H(+)</text>
        <dbReference type="Rhea" id="RHEA:47280"/>
        <dbReference type="Rhea" id="RHEA-COMP:11964"/>
        <dbReference type="Rhea" id="RHEA-COMP:11965"/>
        <dbReference type="ChEBI" id="CHEBI:15377"/>
        <dbReference type="ChEBI" id="CHEBI:15378"/>
        <dbReference type="ChEBI" id="CHEBI:15379"/>
        <dbReference type="ChEBI" id="CHEBI:16469"/>
        <dbReference type="ChEBI" id="CHEBI:57618"/>
        <dbReference type="ChEBI" id="CHEBI:58210"/>
        <dbReference type="ChEBI" id="CHEBI:62845"/>
    </reaction>
    <physiologicalReaction direction="left-to-right" evidence="2">
        <dbReference type="Rhea" id="RHEA:47281"/>
    </physiologicalReaction>
</comment>
<comment type="catalytic activity">
    <reaction evidence="2">
        <text>estrone + reduced [NADPH--hemoprotein reductase] + O2 = 2-hydroxyestrone + oxidized [NADPH--hemoprotein reductase] + H2O + H(+)</text>
        <dbReference type="Rhea" id="RHEA:47208"/>
        <dbReference type="Rhea" id="RHEA-COMP:11964"/>
        <dbReference type="Rhea" id="RHEA-COMP:11965"/>
        <dbReference type="ChEBI" id="CHEBI:1156"/>
        <dbReference type="ChEBI" id="CHEBI:15377"/>
        <dbReference type="ChEBI" id="CHEBI:15378"/>
        <dbReference type="ChEBI" id="CHEBI:15379"/>
        <dbReference type="ChEBI" id="CHEBI:17263"/>
        <dbReference type="ChEBI" id="CHEBI:57618"/>
        <dbReference type="ChEBI" id="CHEBI:58210"/>
    </reaction>
    <physiologicalReaction direction="left-to-right" evidence="2">
        <dbReference type="Rhea" id="RHEA:47209"/>
    </physiologicalReaction>
</comment>
<comment type="catalytic activity">
    <reaction evidence="2">
        <text>estrone + reduced [NADPH--hemoprotein reductase] + O2 = 4-hydroxyestrone + oxidized [NADPH--hemoprotein reductase] + H2O + H(+)</text>
        <dbReference type="Rhea" id="RHEA:47292"/>
        <dbReference type="Rhea" id="RHEA-COMP:11964"/>
        <dbReference type="Rhea" id="RHEA-COMP:11965"/>
        <dbReference type="ChEBI" id="CHEBI:15377"/>
        <dbReference type="ChEBI" id="CHEBI:15378"/>
        <dbReference type="ChEBI" id="CHEBI:15379"/>
        <dbReference type="ChEBI" id="CHEBI:17263"/>
        <dbReference type="ChEBI" id="CHEBI:57618"/>
        <dbReference type="ChEBI" id="CHEBI:58210"/>
        <dbReference type="ChEBI" id="CHEBI:87602"/>
    </reaction>
    <physiologicalReaction direction="left-to-right" evidence="2">
        <dbReference type="Rhea" id="RHEA:47293"/>
    </physiologicalReaction>
</comment>
<comment type="catalytic activity">
    <reaction evidence="2">
        <text>cholesterol + reduced [NADPH--hemoprotein reductase] + O2 = 25-hydroxycholesterol + oxidized [NADPH--hemoprotein reductase] + H2O + H(+)</text>
        <dbReference type="Rhea" id="RHEA:50256"/>
        <dbReference type="Rhea" id="RHEA-COMP:11964"/>
        <dbReference type="Rhea" id="RHEA-COMP:11965"/>
        <dbReference type="ChEBI" id="CHEBI:15377"/>
        <dbReference type="ChEBI" id="CHEBI:15378"/>
        <dbReference type="ChEBI" id="CHEBI:15379"/>
        <dbReference type="ChEBI" id="CHEBI:16113"/>
        <dbReference type="ChEBI" id="CHEBI:42977"/>
        <dbReference type="ChEBI" id="CHEBI:57618"/>
        <dbReference type="ChEBI" id="CHEBI:58210"/>
    </reaction>
    <physiologicalReaction direction="left-to-right" evidence="2">
        <dbReference type="Rhea" id="RHEA:50257"/>
    </physiologicalReaction>
</comment>
<comment type="catalytic activity">
    <reaction evidence="2">
        <text>all-trans-retinol + reduced [NADPH--hemoprotein reductase] + O2 = all-trans-retinal + oxidized [NADPH--hemoprotein reductase] + 2 H2O + H(+)</text>
        <dbReference type="Rhea" id="RHEA:42092"/>
        <dbReference type="Rhea" id="RHEA-COMP:11964"/>
        <dbReference type="Rhea" id="RHEA-COMP:11965"/>
        <dbReference type="ChEBI" id="CHEBI:15377"/>
        <dbReference type="ChEBI" id="CHEBI:15378"/>
        <dbReference type="ChEBI" id="CHEBI:15379"/>
        <dbReference type="ChEBI" id="CHEBI:17336"/>
        <dbReference type="ChEBI" id="CHEBI:17898"/>
        <dbReference type="ChEBI" id="CHEBI:57618"/>
        <dbReference type="ChEBI" id="CHEBI:58210"/>
    </reaction>
    <physiologicalReaction direction="left-to-right" evidence="2">
        <dbReference type="Rhea" id="RHEA:42093"/>
    </physiologicalReaction>
</comment>
<comment type="catalytic activity">
    <reaction evidence="2">
        <text>all-trans-retinal + reduced [NADPH--hemoprotein reductase] + O2 = all-trans-retinoate + oxidized [NADPH--hemoprotein reductase] + H2O + 2 H(+)</text>
        <dbReference type="Rhea" id="RHEA:42088"/>
        <dbReference type="Rhea" id="RHEA-COMP:11964"/>
        <dbReference type="Rhea" id="RHEA-COMP:11965"/>
        <dbReference type="ChEBI" id="CHEBI:15377"/>
        <dbReference type="ChEBI" id="CHEBI:15378"/>
        <dbReference type="ChEBI" id="CHEBI:15379"/>
        <dbReference type="ChEBI" id="CHEBI:17898"/>
        <dbReference type="ChEBI" id="CHEBI:35291"/>
        <dbReference type="ChEBI" id="CHEBI:57618"/>
        <dbReference type="ChEBI" id="CHEBI:58210"/>
    </reaction>
    <physiologicalReaction direction="left-to-right" evidence="2">
        <dbReference type="Rhea" id="RHEA:42089"/>
    </physiologicalReaction>
</comment>
<comment type="catalytic activity">
    <reaction evidence="2">
        <text>(5Z,8Z,11Z,14Z)-eicosatetraenoate + reduced [NADPH--hemoprotein reductase] + O2 = (14R,15S)-epoxy-(5Z,8Z,11Z)-eicosatrienoate + oxidized [NADPH--hemoprotein reductase] + H2O + H(+)</text>
        <dbReference type="Rhea" id="RHEA:49860"/>
        <dbReference type="Rhea" id="RHEA-COMP:11964"/>
        <dbReference type="Rhea" id="RHEA-COMP:11965"/>
        <dbReference type="ChEBI" id="CHEBI:15377"/>
        <dbReference type="ChEBI" id="CHEBI:15378"/>
        <dbReference type="ChEBI" id="CHEBI:15379"/>
        <dbReference type="ChEBI" id="CHEBI:32395"/>
        <dbReference type="ChEBI" id="CHEBI:57618"/>
        <dbReference type="ChEBI" id="CHEBI:58210"/>
        <dbReference type="ChEBI" id="CHEBI:131965"/>
    </reaction>
    <physiologicalReaction direction="left-to-right" evidence="2">
        <dbReference type="Rhea" id="RHEA:49861"/>
    </physiologicalReaction>
</comment>
<comment type="catalytic activity">
    <reaction evidence="2">
        <text>(5Z,8Z,11Z,14Z)-eicosatetraenoate + reduced [NADPH--hemoprotein reductase] + O2 = (14S,15R)-epoxy-(5Z,8Z,11Z)-eicosatrienoate + oxidized [NADPH--hemoprotein reductase] + H2O + H(+)</text>
        <dbReference type="Rhea" id="RHEA:49856"/>
        <dbReference type="Rhea" id="RHEA-COMP:11964"/>
        <dbReference type="Rhea" id="RHEA-COMP:11965"/>
        <dbReference type="ChEBI" id="CHEBI:15377"/>
        <dbReference type="ChEBI" id="CHEBI:15378"/>
        <dbReference type="ChEBI" id="CHEBI:15379"/>
        <dbReference type="ChEBI" id="CHEBI:32395"/>
        <dbReference type="ChEBI" id="CHEBI:57618"/>
        <dbReference type="ChEBI" id="CHEBI:58210"/>
        <dbReference type="ChEBI" id="CHEBI:131964"/>
    </reaction>
    <physiologicalReaction direction="left-to-right" evidence="2">
        <dbReference type="Rhea" id="RHEA:49857"/>
    </physiologicalReaction>
</comment>
<comment type="catalytic activity">
    <reaction evidence="2">
        <text>(5Z,8Z,11Z,14Z,17Z)-eicosapentaenoate + reduced [NADPH--hemoprotein reductase] + O2 = (17R,18S)-epoxy-(5Z,8Z,11Z,14Z)-eicosatetraenoate + oxidized [NADPH--hemoprotein reductase] + H2O + H(+)</text>
        <dbReference type="Rhea" id="RHEA:39779"/>
        <dbReference type="Rhea" id="RHEA-COMP:11964"/>
        <dbReference type="Rhea" id="RHEA-COMP:11965"/>
        <dbReference type="ChEBI" id="CHEBI:15377"/>
        <dbReference type="ChEBI" id="CHEBI:15378"/>
        <dbReference type="ChEBI" id="CHEBI:15379"/>
        <dbReference type="ChEBI" id="CHEBI:57618"/>
        <dbReference type="ChEBI" id="CHEBI:58210"/>
        <dbReference type="ChEBI" id="CHEBI:58562"/>
        <dbReference type="ChEBI" id="CHEBI:76634"/>
    </reaction>
    <physiologicalReaction direction="left-to-right" evidence="2">
        <dbReference type="Rhea" id="RHEA:39780"/>
    </physiologicalReaction>
</comment>
<comment type="catalytic activity">
    <reaction evidence="2">
        <text>(4Z,7Z,10Z,13Z,16Z,19Z)-docosahexaenoate + reduced [NADPH--hemoprotein reductase] + O2 = (19R,20S)-epoxy-(4Z,7Z,10Z,13Z,16Z)-docosapentaenoate + oxidized [NADPH--hemoprotein reductase] + H2O + H(+)</text>
        <dbReference type="Rhea" id="RHEA:52120"/>
        <dbReference type="Rhea" id="RHEA-COMP:11964"/>
        <dbReference type="Rhea" id="RHEA-COMP:11965"/>
        <dbReference type="ChEBI" id="CHEBI:15377"/>
        <dbReference type="ChEBI" id="CHEBI:15378"/>
        <dbReference type="ChEBI" id="CHEBI:15379"/>
        <dbReference type="ChEBI" id="CHEBI:57618"/>
        <dbReference type="ChEBI" id="CHEBI:58210"/>
        <dbReference type="ChEBI" id="CHEBI:77016"/>
        <dbReference type="ChEBI" id="CHEBI:136410"/>
    </reaction>
    <physiologicalReaction direction="left-to-right" evidence="2">
        <dbReference type="Rhea" id="RHEA:52121"/>
    </physiologicalReaction>
</comment>
<comment type="catalytic activity">
    <reaction evidence="2">
        <text>(5S)-hydroperoxy-(6E,8Z,11Z,14Z)-eicosatetraenoate = 5-oxo-(6E,8Z,11Z,14Z)-eicosatetraenoate + H2O</text>
        <dbReference type="Rhea" id="RHEA:48632"/>
        <dbReference type="ChEBI" id="CHEBI:15377"/>
        <dbReference type="ChEBI" id="CHEBI:57450"/>
        <dbReference type="ChEBI" id="CHEBI:65342"/>
    </reaction>
    <physiologicalReaction direction="left-to-right" evidence="2">
        <dbReference type="Rhea" id="RHEA:48633"/>
    </physiologicalReaction>
</comment>
<comment type="catalytic activity">
    <reaction evidence="2">
        <text>(12S)-hydroperoxy-(5Z,8Z,10E,14Z)-eicosatetraenoate = 12-oxo-(5Z,8Z,10E,14Z)-eicosatetraenoate + H2O</text>
        <dbReference type="Rhea" id="RHEA:37947"/>
        <dbReference type="ChEBI" id="CHEBI:15377"/>
        <dbReference type="ChEBI" id="CHEBI:57444"/>
        <dbReference type="ChEBI" id="CHEBI:75231"/>
        <dbReference type="EC" id="4.2.1.152"/>
    </reaction>
    <physiologicalReaction direction="left-to-right" evidence="2">
        <dbReference type="Rhea" id="RHEA:37948"/>
    </physiologicalReaction>
</comment>
<comment type="catalytic activity">
    <reaction evidence="2">
        <text>(15S)-hydroperoxy-(5Z,8Z,11Z,13E)-eicosatetraenoate = 15-oxo-(5Z,8Z,11Z,13E)-eicosatetraenoate + H2O</text>
        <dbReference type="Rhea" id="RHEA:48636"/>
        <dbReference type="ChEBI" id="CHEBI:15377"/>
        <dbReference type="ChEBI" id="CHEBI:57410"/>
        <dbReference type="ChEBI" id="CHEBI:57446"/>
    </reaction>
    <physiologicalReaction direction="left-to-right" evidence="2">
        <dbReference type="Rhea" id="RHEA:48637"/>
    </physiologicalReaction>
</comment>
<comment type="catalytic activity">
    <reaction evidence="2">
        <text>(13S)-hydroperoxy-(9Z,11E)-octadecadienoate = 13-oxo-(9Z,11E)-octadecadienoate + H2O</text>
        <dbReference type="Rhea" id="RHEA:48716"/>
        <dbReference type="ChEBI" id="CHEBI:15377"/>
        <dbReference type="ChEBI" id="CHEBI:57466"/>
        <dbReference type="ChEBI" id="CHEBI:90781"/>
    </reaction>
    <physiologicalReaction direction="left-to-right" evidence="2">
        <dbReference type="Rhea" id="RHEA:48717"/>
    </physiologicalReaction>
</comment>
<comment type="catalytic activity">
    <reaction evidence="2">
        <text>(5Z,8Z,11Z,14Z)-eicosatetraenoate + reduced [NADPH--hemoprotein reductase] + O2 = 13-hydroxy-(5Z,8Z,11Z,14Z)-eicosatetraenoate + oxidized [NADPH--hemoprotein reductase] + H2O + H(+)</text>
        <dbReference type="Rhea" id="RHEA:52292"/>
        <dbReference type="Rhea" id="RHEA-COMP:11964"/>
        <dbReference type="Rhea" id="RHEA-COMP:11965"/>
        <dbReference type="ChEBI" id="CHEBI:15377"/>
        <dbReference type="ChEBI" id="CHEBI:15378"/>
        <dbReference type="ChEBI" id="CHEBI:15379"/>
        <dbReference type="ChEBI" id="CHEBI:32395"/>
        <dbReference type="ChEBI" id="CHEBI:57618"/>
        <dbReference type="ChEBI" id="CHEBI:58210"/>
        <dbReference type="ChEBI" id="CHEBI:136524"/>
    </reaction>
    <physiologicalReaction direction="left-to-right" evidence="2">
        <dbReference type="Rhea" id="RHEA:52293"/>
    </physiologicalReaction>
</comment>
<comment type="catalytic activity">
    <reaction evidence="2">
        <text>(5Z,8Z,11Z,14Z)-eicosatetraenoate + reduced [NADPH--hemoprotein reductase] + O2 = 19-hydroxy-(5Z,8Z,11Z,14Z)-eicosatetraenoate + oxidized [NADPH--hemoprotein reductase] + H2O + H(+)</text>
        <dbReference type="Rhea" id="RHEA:39759"/>
        <dbReference type="Rhea" id="RHEA-COMP:11964"/>
        <dbReference type="Rhea" id="RHEA-COMP:11965"/>
        <dbReference type="ChEBI" id="CHEBI:15377"/>
        <dbReference type="ChEBI" id="CHEBI:15378"/>
        <dbReference type="ChEBI" id="CHEBI:15379"/>
        <dbReference type="ChEBI" id="CHEBI:32395"/>
        <dbReference type="ChEBI" id="CHEBI:57618"/>
        <dbReference type="ChEBI" id="CHEBI:58210"/>
        <dbReference type="ChEBI" id="CHEBI:76627"/>
    </reaction>
    <physiologicalReaction direction="left-to-right" evidence="2">
        <dbReference type="Rhea" id="RHEA:39760"/>
    </physiologicalReaction>
</comment>
<comment type="catalytic activity">
    <reaction evidence="2">
        <text>(9Z,12Z)-octadecadienoate + reduced [NADPH--hemoprotein reductase] + O2 = 11-hydroxy-(9Z,12Z)-octadecadienoate + oxidized [NADPH--hemoprotein reductase] + H2O + H(+)</text>
        <dbReference type="Rhea" id="RHEA:52284"/>
        <dbReference type="Rhea" id="RHEA-COMP:11964"/>
        <dbReference type="Rhea" id="RHEA-COMP:11965"/>
        <dbReference type="ChEBI" id="CHEBI:15377"/>
        <dbReference type="ChEBI" id="CHEBI:15378"/>
        <dbReference type="ChEBI" id="CHEBI:15379"/>
        <dbReference type="ChEBI" id="CHEBI:30245"/>
        <dbReference type="ChEBI" id="CHEBI:57618"/>
        <dbReference type="ChEBI" id="CHEBI:58210"/>
        <dbReference type="ChEBI" id="CHEBI:136522"/>
    </reaction>
    <physiologicalReaction direction="left-to-right" evidence="2">
        <dbReference type="Rhea" id="RHEA:52285"/>
    </physiologicalReaction>
</comment>
<comment type="cofactor">
    <cofactor evidence="1">
        <name>heme</name>
        <dbReference type="ChEBI" id="CHEBI:30413"/>
    </cofactor>
</comment>
<comment type="pathway">
    <text evidence="2">Cofactor metabolism; retinol metabolism.</text>
</comment>
<comment type="pathway">
    <text evidence="2">Steroid metabolism; cholesterol metabolism.</text>
</comment>
<comment type="pathway">
    <text evidence="2">Lipid metabolism; arachidonate metabolism.</text>
</comment>
<comment type="subunit">
    <text evidence="2">Interacts with PGRMC1; the interaction requires PGRMC1 homodimerization.</text>
</comment>
<comment type="subcellular location">
    <subcellularLocation>
        <location evidence="2">Endoplasmic reticulum membrane</location>
        <topology evidence="2">Peripheral membrane protein</topology>
    </subcellularLocation>
    <subcellularLocation>
        <location evidence="2">Microsome membrane</location>
        <topology evidence="2">Peripheral membrane protein</topology>
    </subcellularLocation>
</comment>
<comment type="similarity">
    <text evidence="3">Belongs to the cytochrome P450 family.</text>
</comment>
<gene>
    <name type="primary">CYP1A2</name>
</gene>
<reference key="1">
    <citation type="submission" date="2004-07" db="EMBL/GenBank/DDBJ databases">
        <title>Molecular cloning and function analysis of cytochrome P450 1A2 from Japanese monkey liver: comparison with marmoset CYP1A2.</title>
        <authorList>
            <person name="Narimatsu S."/>
            <person name="Oda M."/>
            <person name="Hichiya H."/>
            <person name="Asaoka K."/>
            <person name="Hanioka N."/>
            <person name="Yamamoto S."/>
        </authorList>
    </citation>
    <scope>NUCLEOTIDE SEQUENCE [MRNA]</scope>
</reference>
<keyword id="KW-0256">Endoplasmic reticulum</keyword>
<keyword id="KW-0276">Fatty acid metabolism</keyword>
<keyword id="KW-0325">Glycoprotein</keyword>
<keyword id="KW-0349">Heme</keyword>
<keyword id="KW-0408">Iron</keyword>
<keyword id="KW-0443">Lipid metabolism</keyword>
<keyword id="KW-0456">Lyase</keyword>
<keyword id="KW-0472">Membrane</keyword>
<keyword id="KW-0479">Metal-binding</keyword>
<keyword id="KW-0492">Microsome</keyword>
<keyword id="KW-0503">Monooxygenase</keyword>
<keyword id="KW-0560">Oxidoreductase</keyword>
<keyword id="KW-0753">Steroid metabolism</keyword>
<keyword id="KW-1207">Sterol metabolism</keyword>
<feature type="chain" id="PRO_0000232908" description="Cytochrome P450 1A2">
    <location>
        <begin position="1"/>
        <end position="516"/>
    </location>
</feature>
<feature type="binding site" evidence="1">
    <location>
        <position position="226"/>
    </location>
    <ligand>
        <name>substrate</name>
    </ligand>
</feature>
<feature type="binding site" description="axial binding residue" evidence="1">
    <location>
        <position position="458"/>
    </location>
    <ligand>
        <name>heme</name>
        <dbReference type="ChEBI" id="CHEBI:30413"/>
    </ligand>
    <ligandPart>
        <name>Fe</name>
        <dbReference type="ChEBI" id="CHEBI:18248"/>
    </ligandPart>
</feature>
<feature type="glycosylation site" description="O-linked (GlcNAc) serine" evidence="1">
    <location>
        <position position="69"/>
    </location>
</feature>
<accession>Q4H4C3</accession>
<protein>
    <recommendedName>
        <fullName>Cytochrome P450 1A2</fullName>
        <ecNumber evidence="2">1.14.14.1</ecNumber>
    </recommendedName>
    <alternativeName>
        <fullName>CYPIA2</fullName>
    </alternativeName>
    <alternativeName>
        <fullName evidence="2">Cholesterol 25-hydroxylase</fullName>
    </alternativeName>
    <alternativeName>
        <fullName>Hydroperoxy icosatetraenoate dehydratase</fullName>
        <ecNumber evidence="2">4.2.1.152</ecNumber>
    </alternativeName>
</protein>
<proteinExistence type="evidence at transcript level"/>
<name>CP1A2_MACFU</name>
<evidence type="ECO:0000250" key="1"/>
<evidence type="ECO:0000250" key="2">
    <source>
        <dbReference type="UniProtKB" id="P05177"/>
    </source>
</evidence>
<evidence type="ECO:0000305" key="3"/>
<sequence length="516" mass="58337">MALSQFVPFSATELLLASAIFCLVFWVLRGSRPRVPKGLKSPPEPWGWPLLGHVLTLGKNPHLALSRMSQLYGDVLQIRIGSTPVLVLSGLDTIRQALVRQGDDFKGRPDLYSFTFITDGQSMSFSPDSGPVWAARRRLAQNALNTFSIASDPASSSSCYLEEHVSKEAEALISRLQELMAGPGHFDPYNQVVVSVANVIGAMCFGQHFPESSDEMLSLVKNSHEFVESASSGNPVDFFPILRYLPNPALQRFKAFNQRFRRFLQKTVQEHYQDFDKNSVQDITGALFKHSKKGPRASGNLIPQEKIVNLVNDIFGAEFDTIATAISWSLMYLVTKPEIQRKIQKELDAVIGRGRRPRLSDRPQLPYLEAFILETFRHSSFVPFTIPHSTTRDTTLNGFYIPRECCVFINQWQVNHDPQLWGDPSEFRPERFLTAEGTTINKPLSEKIMLFGLGKRRCIGEVLGKWEVFLFLAILLQQLEFSVPPGVKVDLTPIYGLTMKHARCEHFQARLRFSFQ</sequence>